<dbReference type="EMBL" id="M20036">
    <property type="protein sequence ID" value="AAA66615.1"/>
    <property type="status" value="ALT_SEQ"/>
    <property type="molecule type" value="Genomic_DNA"/>
</dbReference>
<dbReference type="EMBL" id="JN040434">
    <property type="protein sequence ID" value="AEK27534.1"/>
    <property type="status" value="ALT_SEQ"/>
    <property type="molecule type" value="Genomic_DNA"/>
</dbReference>
<dbReference type="PIR" id="B36760">
    <property type="entry name" value="VCPVAP"/>
</dbReference>
<dbReference type="RefSeq" id="NP_042875.1">
    <property type="nucleotide sequence ID" value="NC_001662.1"/>
</dbReference>
<dbReference type="PDB" id="8EP2">
    <property type="method" value="EM"/>
    <property type="resolution" value="2.37 A"/>
    <property type="chains" value="1/2/3/4/5/6/7/8/A/B/C/D/E/F/G/H/I/J/K/L/M/N/O/P/Q/R/S/T/U/V=44-690"/>
</dbReference>
<dbReference type="PDBsum" id="8EP2"/>
<dbReference type="EMDB" id="EMD-28514"/>
<dbReference type="SMR" id="P24029"/>
<dbReference type="GeneID" id="1494587"/>
<dbReference type="KEGG" id="vg:1494587"/>
<dbReference type="Proteomes" id="UP000008470">
    <property type="component" value="Segment"/>
</dbReference>
<dbReference type="GO" id="GO:0042025">
    <property type="term" value="C:host cell nucleus"/>
    <property type="evidence" value="ECO:0007669"/>
    <property type="project" value="UniProtKB-SubCell"/>
</dbReference>
<dbReference type="GO" id="GO:0039615">
    <property type="term" value="C:T=1 icosahedral viral capsid"/>
    <property type="evidence" value="ECO:0000314"/>
    <property type="project" value="CACAO"/>
</dbReference>
<dbReference type="GO" id="GO:0005198">
    <property type="term" value="F:structural molecule activity"/>
    <property type="evidence" value="ECO:0007669"/>
    <property type="project" value="InterPro"/>
</dbReference>
<dbReference type="GO" id="GO:0075512">
    <property type="term" value="P:clathrin-dependent endocytosis of virus by host cell"/>
    <property type="evidence" value="ECO:0007669"/>
    <property type="project" value="UniProtKB-KW"/>
</dbReference>
<dbReference type="GO" id="GO:0140267">
    <property type="term" value="P:symbiont entry into host cell via permeabilization of host membrane"/>
    <property type="evidence" value="ECO:0007669"/>
    <property type="project" value="UniProtKB-KW"/>
</dbReference>
<dbReference type="GO" id="GO:0019062">
    <property type="term" value="P:virion attachment to host cell"/>
    <property type="evidence" value="ECO:0007669"/>
    <property type="project" value="UniProtKB-KW"/>
</dbReference>
<dbReference type="Gene3D" id="2.170.30.10">
    <property type="entry name" value="Parvovirus coat protein VP1/VP2"/>
    <property type="match status" value="1"/>
</dbReference>
<dbReference type="InterPro" id="IPR016184">
    <property type="entry name" value="Capsid/spike_ssDNA_virus"/>
</dbReference>
<dbReference type="InterPro" id="IPR001403">
    <property type="entry name" value="Parvovirus_coat"/>
</dbReference>
<dbReference type="InterPro" id="IPR036952">
    <property type="entry name" value="VP1/VP2"/>
</dbReference>
<dbReference type="Pfam" id="PF00740">
    <property type="entry name" value="Parvo_coat"/>
    <property type="match status" value="1"/>
</dbReference>
<dbReference type="SUPFAM" id="SSF88645">
    <property type="entry name" value="ssDNA viruses"/>
    <property type="match status" value="1"/>
</dbReference>
<keyword id="KW-0002">3D-structure</keyword>
<keyword id="KW-0025">Alternative splicing</keyword>
<keyword id="KW-0167">Capsid protein</keyword>
<keyword id="KW-1165">Clathrin-mediated endocytosis of virus by host</keyword>
<keyword id="KW-1048">Host nucleus</keyword>
<keyword id="KW-0945">Host-virus interaction</keyword>
<keyword id="KW-1185">Reference proteome</keyword>
<keyword id="KW-1140">T=1 icosahedral capsid protein</keyword>
<keyword id="KW-1161">Viral attachment to host cell</keyword>
<keyword id="KW-1162">Viral penetration into host cytoplasm</keyword>
<keyword id="KW-1173">Viral penetration via permeabilization of host membrane</keyword>
<keyword id="KW-0946">Virion</keyword>
<keyword id="KW-1164">Virus endocytosis by host</keyword>
<keyword id="KW-1160">Virus entry into host cell</keyword>
<feature type="chain" id="PRO_0000428998" description="Capsid protein VP1">
    <location>
        <begin position="1"/>
        <end position="690"/>
    </location>
</feature>
<feature type="region of interest" description="Disordered" evidence="1">
    <location>
        <begin position="1"/>
        <end position="80"/>
    </location>
</feature>
<feature type="compositionally biased region" description="Acidic residues" evidence="1">
    <location>
        <begin position="40"/>
        <end position="53"/>
    </location>
</feature>
<feature type="compositionally biased region" description="Gly residues" evidence="1">
    <location>
        <begin position="64"/>
        <end position="80"/>
    </location>
</feature>
<feature type="splice variant" id="VSP_054580" description="In isoform VP2." evidence="6">
    <location>
        <begin position="1"/>
        <end position="51"/>
    </location>
</feature>
<protein>
    <recommendedName>
        <fullName>Capsid protein VP1</fullName>
    </recommendedName>
</protein>
<organism>
    <name type="scientific">Aleutian mink disease parvovirus (strain G)</name>
    <name type="common">ADV</name>
    <dbReference type="NCBI Taxonomy" id="10783"/>
    <lineage>
        <taxon>Viruses</taxon>
        <taxon>Monodnaviria</taxon>
        <taxon>Shotokuvirae</taxon>
        <taxon>Cossaviricota</taxon>
        <taxon>Quintoviricetes</taxon>
        <taxon>Piccovirales</taxon>
        <taxon>Parvoviridae</taxon>
        <taxon>Parvovirinae</taxon>
        <taxon>Amdoparvovirus</taxon>
        <taxon>Amdoparvovirus carnivoran1</taxon>
    </lineage>
</organism>
<name>CAPSD_ADVG</name>
<proteinExistence type="evidence at protein level"/>
<sequence length="690" mass="78502">MSKIPQHYPGKKRSAPRHVFIQQAKKKKQTNPAVYHGEDTIEEMDSTEAEQMDTEQATNQTAEAGGGGGGGGGGGGGGGGVGNSTGGFNNTTEFKVINNEVYITCHATRMVHINQADTDEYLIFNAGRTTDTKTHQQKLNLEFFVYDDFHQQVMTPWYIVDSNAWGVWMSPKDFQQMKTLCSEISLVTLEQEIDNVTIKTVTETNQGNASTKQFNNDLTASLQVALDTNNILPYTPAAPLGETLGFVPWRATKPTQYRYYHPCYIYNRYPNIQKVATETLTWDAVQDDYLSVDEQYFNFITIENNIPINILRTGDNFHTGLYEFNSKPCKLTLSYQSTRCLGLPPLCKPKTDTTHKVTSKENGADLIYIQGQDNTRLGHFWGEERGKKNAEMNRIRPYNIGYQYPEWIIPAGLQGSYFAGGPRQWSDTTKGAGTHSQHLQQNFSTRYIYDRNHGGDNEVDLLDGIPIHERSNYYSDNEIEQHTAKQPKLRTPPIHHSKIDSWEEEGWPAASGTHFEDEVIYLDYFNFSGEQELNFPHEVLDDAAQMKKLLNSYQPTVAQDNVGPVYPWGQIWDKKPHMDHKPSMNNNAPFVCKNNPPGQLFVKLTENLTDTFNYDENPDRIKTYGYFTWRGKLVLKGKLSQVTCWNPVKRELIGEPGVFTKDKYHKQIPNNKGNFEIGLQYGRSTIKYIY</sequence>
<comment type="function">
    <text evidence="2 4 5">Capsid protein self-assembles to form an icosahedral capsid with a T=1 symmetry, about 25 nm in diameter, and consisting of 60 copies of two size variants of the capsid proteins, VP1 (10% abundance) and VP2 (90% abundance), which differ by the presence of an N-terminal extension in the minor protein VP1. Capsid proteins are responsible for the attachment to host cell receptors. This attachment induces virion internalization predominantly through clathrin-dependent endocytosis. VP1 binds DNA and may therefore play a role in viral DNA encapsidation.</text>
</comment>
<comment type="subcellular location">
    <subcellularLocation>
        <location evidence="3">Virion</location>
    </subcellularLocation>
    <subcellularLocation>
        <location evidence="3">Host nucleus</location>
    </subcellularLocation>
</comment>
<comment type="alternative products">
    <event type="alternative splicing"/>
    <isoform>
        <id>P24029-1</id>
        <name>VP1</name>
        <sequence type="displayed"/>
    </isoform>
    <isoform>
        <id>P24029-2</id>
        <name>VP2</name>
        <sequence type="described" ref="VSP_054580"/>
    </isoform>
</comment>
<comment type="similarity">
    <text evidence="6">Belongs to the parvoviridae capsid protein family.</text>
</comment>
<comment type="sequence caution" evidence="6">
    <conflict type="erroneous gene model prediction">
        <sequence resource="EMBL-CDS" id="AAA66615"/>
    </conflict>
</comment>
<comment type="sequence caution" evidence="6">
    <conflict type="erroneous gene model prediction">
        <sequence resource="EMBL-CDS" id="AEK27534"/>
    </conflict>
</comment>
<organismHost>
    <name type="scientific">Mustela</name>
    <dbReference type="NCBI Taxonomy" id="9665"/>
</organismHost>
<evidence type="ECO:0000256" key="1">
    <source>
        <dbReference type="SAM" id="MobiDB-lite"/>
    </source>
</evidence>
<evidence type="ECO:0000269" key="2">
    <source>
    </source>
</evidence>
<evidence type="ECO:0000269" key="3">
    <source>
    </source>
</evidence>
<evidence type="ECO:0000269" key="4">
    <source>
    </source>
</evidence>
<evidence type="ECO:0000269" key="5">
    <source>
    </source>
</evidence>
<evidence type="ECO:0000305" key="6"/>
<accession>P24029</accession>
<accession>G1E7B4</accession>
<reference key="1">
    <citation type="journal article" date="1988" name="J. Virol.">
        <title>Nucleotide sequence and genomic organization of Aleutian mink disease parvovirus (ADV): sequence comparisons between a nonpathogenic and a pathogenic strain of ADV.</title>
        <authorList>
            <person name="Bloom M.E."/>
            <person name="Alexandersen S."/>
            <person name="Perryman S."/>
            <person name="Lechner D."/>
            <person name="Wolfinbarger J.B."/>
        </authorList>
    </citation>
    <scope>NUCLEOTIDE SEQUENCE [GENOMIC DNA]</scope>
</reference>
<reference key="2">
    <citation type="journal article" date="2012" name="Virology">
        <title>Internal polyadenylation of parvoviral precursor mRNA limits progeny virus production.</title>
        <authorList>
            <person name="Huang Q."/>
            <person name="Deng X."/>
            <person name="Best S.M."/>
            <person name="Bloom M.E."/>
            <person name="Li Y."/>
            <person name="Qiu J."/>
        </authorList>
    </citation>
    <scope>NUCLEOTIDE SEQUENCE [GENOMIC DNA]</scope>
</reference>
<reference key="3">
    <citation type="journal article" date="1988" name="Virology">
        <title>Capsid protein VP1 (p85) of Aleutian disease virus is a major DNA-binding protein.</title>
        <authorList>
            <person name="Willwand K."/>
            <person name="Kaaden O.R."/>
        </authorList>
    </citation>
    <scope>FUNCTION</scope>
</reference>
<reference key="4">
    <citation type="journal article" date="1993" name="J. Virol.">
        <title>Expression of Aleutian mink disease parvovirus proteins in a baculovirus vector system.</title>
        <authorList>
            <person name="Christensen J."/>
            <person name="Storgaard T."/>
            <person name="Bloch B."/>
            <person name="Alexandersen S."/>
            <person name="Aasted B."/>
        </authorList>
    </citation>
    <scope>FUNCTION</scope>
</reference>
<reference key="5">
    <citation type="journal article" date="2001" name="J. Virol.">
        <title>Identification of aleutian mink disease parvovirus capsid sequences mediating antibody-dependent enhancement of infection, virus neutralization, and immune complex formation.</title>
        <authorList>
            <person name="Bloom M.E."/>
            <person name="Best S.M."/>
            <person name="Hayes S.F."/>
            <person name="Wells R.D."/>
            <person name="Wolfinbarger J.B."/>
            <person name="McKenna R."/>
            <person name="Agbandje-McKenna M."/>
        </authorList>
    </citation>
    <scope>FUNCTION</scope>
</reference>
<reference key="6">
    <citation type="journal article" date="2003" name="J. Virol.">
        <title>Caspase cleavage of the nonstructural protein NS1 mediates replication of Aleutian mink disease parvovirus.</title>
        <authorList>
            <person name="Best S.M."/>
            <person name="Shelton J.F."/>
            <person name="Pompey J.M."/>
            <person name="Wolfinbarger J.B."/>
            <person name="Bloom M.E."/>
        </authorList>
    </citation>
    <scope>SUBCELLULAR LOCATION</scope>
</reference>